<organism>
    <name type="scientific">Influenza A virus (strain A/Brevig Mission/1/1918 H1N1)</name>
    <name type="common">Influenza A virus (strain A/South Carolina/1/1918 H1N1)</name>
    <dbReference type="NCBI Taxonomy" id="88776"/>
    <lineage>
        <taxon>Viruses</taxon>
        <taxon>Riboviria</taxon>
        <taxon>Orthornavirae</taxon>
        <taxon>Negarnaviricota</taxon>
        <taxon>Polyploviricotina</taxon>
        <taxon>Insthoviricetes</taxon>
        <taxon>Articulavirales</taxon>
        <taxon>Orthomyxoviridae</taxon>
        <taxon>Alphainfluenzavirus</taxon>
        <taxon>Alphainfluenzavirus influenzae</taxon>
        <taxon>Influenza A virus</taxon>
    </lineage>
</organism>
<name>NCAP_I18A0</name>
<organismHost>
    <name type="scientific">Aves</name>
    <dbReference type="NCBI Taxonomy" id="8782"/>
</organismHost>
<organismHost>
    <name type="scientific">Homo sapiens</name>
    <name type="common">Human</name>
    <dbReference type="NCBI Taxonomy" id="9606"/>
</organismHost>
<organismHost>
    <name type="scientific">Sus scrofa</name>
    <name type="common">Pig</name>
    <dbReference type="NCBI Taxonomy" id="9823"/>
</organismHost>
<comment type="function">
    <text evidence="1">Encapsidates the negative strand viral RNA, protecting it from nucleases. The encapsidated genomic RNA is termed the ribonucleoprotein (RNP) and serves as template for transcription and replication. The RNP needs to be localized in the host nucleus to start an infectious cycle, but is too large to diffuse through the nuclear pore complex. NP comprises at least 2 nuclear localization signals that are responsible for the active RNP import into the nucleus through cellular importin alpha/beta pathway. Later in the infection, nclear export of RNPs are mediated through viral proteins NEP interacting with M1 which binds nucleoproteins. It is possible that nucleoprotein binds directly host exportin-1/XPO1 and plays an active role in RNPs nuclear export. M1 interaction with RNP seems to hide nucleoprotein's nuclear localization signals. Soon after a virion infects a new cell, M1 dissociates from the RNP under acidification of the virion driven by M2 protein. Dissociation of M1 from RNP unmasks nucleoprotein's nuclear localization signals, targeting the RNP to the nucleus.</text>
</comment>
<comment type="subunit">
    <text evidence="1">Homomultimerizes to form the nucleocapsid. May bind host exportin-1/XPO1. Binds to viral genomic RNA. Protein-RNA contacts are mediated by a combination of electrostatic interactions between positively charged residues and the phosphate backbone and planar interactions between aromatic side chains and bases.</text>
</comment>
<comment type="subcellular location">
    <subcellularLocation>
        <location evidence="1">Virion</location>
    </subcellularLocation>
    <subcellularLocation>
        <location evidence="1">Host nucleus</location>
    </subcellularLocation>
</comment>
<comment type="PTM">
    <text evidence="1">Late in virus-infected cells, may be cleaved from a 56-kDa protein to a 53-kDa protein by a cellular caspase. This cleavage might be a marker for the onset of apoptosis in infected cells or have a specific function in virus host interaction.</text>
</comment>
<comment type="miscellaneous">
    <text>South Carolina isolate has been sequenced from formalid fixed-lung tissues of a 21-year-old male which died in 1918 at Ft. Jackson, SC. Brevig Mission isolate has been sequenced from lung tissues of an Inuit woman buried in the permafrost in a gravesite near Brevig Mission, Alaska. This sample was recovered by John Hultin, retired pathologist.</text>
</comment>
<comment type="similarity">
    <text evidence="1">Belongs to the influenza viruses nucleoprotein family.</text>
</comment>
<feature type="chain" id="PRO_0000310567" description="Nucleoprotein">
    <location>
        <begin position="1"/>
        <end position="498"/>
    </location>
</feature>
<feature type="region of interest" description="Disordered" evidence="2">
    <location>
        <begin position="1"/>
        <end position="21"/>
    </location>
</feature>
<feature type="short sequence motif" description="Unconventional nuclear localization signal" evidence="1">
    <location>
        <begin position="1"/>
        <end position="18"/>
    </location>
</feature>
<feature type="short sequence motif" description="Bipartite nuclear localization signal" evidence="1">
    <location>
        <begin position="198"/>
        <end position="216"/>
    </location>
</feature>
<feature type="compositionally biased region" description="Basic and acidic residues" evidence="2">
    <location>
        <begin position="8"/>
        <end position="21"/>
    </location>
</feature>
<reference key="1">
    <citation type="journal article" date="2004" name="J. Virol.">
        <title>Novel origin of the 1918 pandemic influenza virus nucleoprotein gene.</title>
        <authorList>
            <person name="Reid A.H."/>
            <person name="Fanning T.G."/>
            <person name="Janczewski T.A."/>
            <person name="Lourens R.M."/>
            <person name="Taubenberger J.K."/>
        </authorList>
    </citation>
    <scope>NUCLEOTIDE SEQUENCE [MRNA]</scope>
</reference>
<reference key="2">
    <citation type="journal article" date="1997" name="Science">
        <title>Initial genetic characterization of the 1918 'Spanish' influenza virus.</title>
        <authorList>
            <person name="Taubenberger J.K."/>
            <person name="Reid A.H."/>
            <person name="Krafft A.E."/>
            <person name="Bijwaard K.E."/>
            <person name="Fanning T.G."/>
        </authorList>
    </citation>
    <scope>NUCLEOTIDE SEQUENCE [GENOMIC RNA] OF 166-186 AND 292-314</scope>
    <source>
        <strain>A/South Carolina/1/18</strain>
    </source>
</reference>
<sequence length="498" mass="56304">MASQGTKRSYEQMETDGERQNATEIRASVGRMIGGIGRFYIQMCTELKLSDYEGRLIQNSITIERMVLSAFDERRNKYLEEHPSAGKDPKKTGGPIYRRIDGKWMRELILYDKEEIRRIWRQANNGEDATAGLTHMMIWHSNLNDATYQRTRALVRTGMDPRMCSLMQGSTLPRRSGAAGAAVKGVGTMVMELIRMIKRGINDRNFWRGENGRRTRIAYERMCNILKGKFQTAAQRAMMDQVRESRNPGNAEIEDLIFLARSALILRGSVAHKSCLPACVYGPAVASGYDFEREGYSLVGIDPFRLLQNSQVYSLIRPNENPAHKSQLVWMACHSAAFEDLRVSSFIRGTRVVPRGKLSTRGVQIASNENMETMDSSTLELRSRYWAIRTRSGGNTNQQRASAGQISVQPTFSVQRNLPFERATIMAAFTGNTEGRTSDMRTEIIRMMESARPEDVSFQGRGVFELSDEKATSPIVPSFDMSNEGSYFFGDNAEEYDN</sequence>
<proteinExistence type="evidence at transcript level"/>
<keyword id="KW-0167">Capsid protein</keyword>
<keyword id="KW-1139">Helical capsid protein</keyword>
<keyword id="KW-1048">Host nucleus</keyword>
<keyword id="KW-0945">Host-virus interaction</keyword>
<keyword id="KW-0687">Ribonucleoprotein</keyword>
<keyword id="KW-0694">RNA-binding</keyword>
<keyword id="KW-0543">Viral nucleoprotein</keyword>
<keyword id="KW-1163">Viral penetration into host nucleus</keyword>
<keyword id="KW-0946">Virion</keyword>
<keyword id="KW-1160">Virus entry into host cell</keyword>
<gene>
    <name evidence="1" type="primary">NP</name>
</gene>
<dbReference type="EMBL" id="AY744935">
    <property type="protein sequence ID" value="AAV48837.1"/>
    <property type="molecule type" value="mRNA"/>
</dbReference>
<dbReference type="EMBL" id="AH006859">
    <property type="protein sequence ID" value="AAC57071.1"/>
    <property type="molecule type" value="Genomic_RNA"/>
</dbReference>
<dbReference type="EMBL" id="AH006859">
    <property type="protein sequence ID" value="AAC57072.1"/>
    <property type="molecule type" value="Genomic_RNA"/>
</dbReference>
<dbReference type="SMR" id="Q5UEW0"/>
<dbReference type="PRO" id="PR:Q5UEW0"/>
<dbReference type="Proteomes" id="UP000008430">
    <property type="component" value="Genome"/>
</dbReference>
<dbReference type="GO" id="GO:0019029">
    <property type="term" value="C:helical viral capsid"/>
    <property type="evidence" value="ECO:0007669"/>
    <property type="project" value="UniProtKB-UniRule"/>
</dbReference>
<dbReference type="GO" id="GO:0043657">
    <property type="term" value="C:host cell"/>
    <property type="evidence" value="ECO:0007669"/>
    <property type="project" value="GOC"/>
</dbReference>
<dbReference type="GO" id="GO:0042025">
    <property type="term" value="C:host cell nucleus"/>
    <property type="evidence" value="ECO:0007669"/>
    <property type="project" value="UniProtKB-SubCell"/>
</dbReference>
<dbReference type="GO" id="GO:1990904">
    <property type="term" value="C:ribonucleoprotein complex"/>
    <property type="evidence" value="ECO:0007669"/>
    <property type="project" value="UniProtKB-KW"/>
</dbReference>
<dbReference type="GO" id="GO:0019013">
    <property type="term" value="C:viral nucleocapsid"/>
    <property type="evidence" value="ECO:0007669"/>
    <property type="project" value="UniProtKB-UniRule"/>
</dbReference>
<dbReference type="GO" id="GO:0003723">
    <property type="term" value="F:RNA binding"/>
    <property type="evidence" value="ECO:0007669"/>
    <property type="project" value="UniProtKB-UniRule"/>
</dbReference>
<dbReference type="GO" id="GO:0005198">
    <property type="term" value="F:structural molecule activity"/>
    <property type="evidence" value="ECO:0007669"/>
    <property type="project" value="UniProtKB-UniRule"/>
</dbReference>
<dbReference type="GO" id="GO:0046718">
    <property type="term" value="P:symbiont entry into host cell"/>
    <property type="evidence" value="ECO:0007669"/>
    <property type="project" value="UniProtKB-KW"/>
</dbReference>
<dbReference type="GO" id="GO:0075732">
    <property type="term" value="P:viral penetration into host nucleus"/>
    <property type="evidence" value="ECO:0007669"/>
    <property type="project" value="UniProtKB-UniRule"/>
</dbReference>
<dbReference type="HAMAP" id="MF_04070">
    <property type="entry name" value="INFV_NCAP"/>
    <property type="match status" value="1"/>
</dbReference>
<dbReference type="InterPro" id="IPR002141">
    <property type="entry name" value="Flu_NP"/>
</dbReference>
<dbReference type="Pfam" id="PF00506">
    <property type="entry name" value="Flu_NP"/>
    <property type="match status" value="1"/>
</dbReference>
<dbReference type="SUPFAM" id="SSF161003">
    <property type="entry name" value="flu NP-like"/>
    <property type="match status" value="1"/>
</dbReference>
<protein>
    <recommendedName>
        <fullName evidence="1">Nucleoprotein</fullName>
    </recommendedName>
    <alternativeName>
        <fullName evidence="1">Nucleocapsid protein</fullName>
        <shortName evidence="1">Protein N</shortName>
    </alternativeName>
</protein>
<evidence type="ECO:0000255" key="1">
    <source>
        <dbReference type="HAMAP-Rule" id="MF_04070"/>
    </source>
</evidence>
<evidence type="ECO:0000256" key="2">
    <source>
        <dbReference type="SAM" id="MobiDB-lite"/>
    </source>
</evidence>
<accession>Q5UEW0</accession>
<accession>O10422</accession>
<accession>O10423</accession>